<accession>Q7VDQ5</accession>
<dbReference type="EC" id="4.2.1.19" evidence="1"/>
<dbReference type="EMBL" id="AE017126">
    <property type="protein sequence ID" value="AAP99359.1"/>
    <property type="molecule type" value="Genomic_DNA"/>
</dbReference>
<dbReference type="RefSeq" id="NP_874707.1">
    <property type="nucleotide sequence ID" value="NC_005042.1"/>
</dbReference>
<dbReference type="RefSeq" id="WP_011124468.1">
    <property type="nucleotide sequence ID" value="NC_005042.1"/>
</dbReference>
<dbReference type="SMR" id="Q7VDQ5"/>
<dbReference type="STRING" id="167539.Pro_0313"/>
<dbReference type="EnsemblBacteria" id="AAP99359">
    <property type="protein sequence ID" value="AAP99359"/>
    <property type="gene ID" value="Pro_0313"/>
</dbReference>
<dbReference type="KEGG" id="pma:Pro_0313"/>
<dbReference type="PATRIC" id="fig|167539.5.peg.322"/>
<dbReference type="eggNOG" id="COG0131">
    <property type="taxonomic scope" value="Bacteria"/>
</dbReference>
<dbReference type="HOGENOM" id="CLU_044308_3_0_3"/>
<dbReference type="OrthoDB" id="9790411at2"/>
<dbReference type="UniPathway" id="UPA00031">
    <property type="reaction ID" value="UER00011"/>
</dbReference>
<dbReference type="Proteomes" id="UP000001420">
    <property type="component" value="Chromosome"/>
</dbReference>
<dbReference type="GO" id="GO:0005737">
    <property type="term" value="C:cytoplasm"/>
    <property type="evidence" value="ECO:0007669"/>
    <property type="project" value="UniProtKB-SubCell"/>
</dbReference>
<dbReference type="GO" id="GO:0004424">
    <property type="term" value="F:imidazoleglycerol-phosphate dehydratase activity"/>
    <property type="evidence" value="ECO:0007669"/>
    <property type="project" value="UniProtKB-UniRule"/>
</dbReference>
<dbReference type="GO" id="GO:0000105">
    <property type="term" value="P:L-histidine biosynthetic process"/>
    <property type="evidence" value="ECO:0007669"/>
    <property type="project" value="UniProtKB-UniRule"/>
</dbReference>
<dbReference type="CDD" id="cd07914">
    <property type="entry name" value="IGPD"/>
    <property type="match status" value="1"/>
</dbReference>
<dbReference type="FunFam" id="3.30.230.40:FF:000002">
    <property type="entry name" value="Imidazoleglycerol-phosphate dehydratase"/>
    <property type="match status" value="1"/>
</dbReference>
<dbReference type="FunFam" id="3.30.230.40:FF:000003">
    <property type="entry name" value="Imidazoleglycerol-phosphate dehydratase HisB"/>
    <property type="match status" value="1"/>
</dbReference>
<dbReference type="Gene3D" id="3.30.230.40">
    <property type="entry name" value="Imidazole glycerol phosphate dehydratase, domain 1"/>
    <property type="match status" value="2"/>
</dbReference>
<dbReference type="HAMAP" id="MF_00076">
    <property type="entry name" value="HisB"/>
    <property type="match status" value="1"/>
</dbReference>
<dbReference type="InterPro" id="IPR038494">
    <property type="entry name" value="IGPD_sf"/>
</dbReference>
<dbReference type="InterPro" id="IPR000807">
    <property type="entry name" value="ImidazoleglycerolP_deHydtase"/>
</dbReference>
<dbReference type="InterPro" id="IPR020565">
    <property type="entry name" value="ImidazoleglycerP_deHydtase_CS"/>
</dbReference>
<dbReference type="InterPro" id="IPR020568">
    <property type="entry name" value="Ribosomal_Su5_D2-typ_SF"/>
</dbReference>
<dbReference type="NCBIfam" id="NF002108">
    <property type="entry name" value="PRK00951.1-3"/>
    <property type="match status" value="1"/>
</dbReference>
<dbReference type="NCBIfam" id="NF002109">
    <property type="entry name" value="PRK00951.1-5"/>
    <property type="match status" value="1"/>
</dbReference>
<dbReference type="NCBIfam" id="NF002111">
    <property type="entry name" value="PRK00951.2-1"/>
    <property type="match status" value="1"/>
</dbReference>
<dbReference type="NCBIfam" id="NF002114">
    <property type="entry name" value="PRK00951.2-4"/>
    <property type="match status" value="1"/>
</dbReference>
<dbReference type="PANTHER" id="PTHR23133:SF2">
    <property type="entry name" value="IMIDAZOLEGLYCEROL-PHOSPHATE DEHYDRATASE"/>
    <property type="match status" value="1"/>
</dbReference>
<dbReference type="PANTHER" id="PTHR23133">
    <property type="entry name" value="IMIDAZOLEGLYCEROL-PHOSPHATE DEHYDRATASE HIS7"/>
    <property type="match status" value="1"/>
</dbReference>
<dbReference type="Pfam" id="PF00475">
    <property type="entry name" value="IGPD"/>
    <property type="match status" value="1"/>
</dbReference>
<dbReference type="SUPFAM" id="SSF54211">
    <property type="entry name" value="Ribosomal protein S5 domain 2-like"/>
    <property type="match status" value="2"/>
</dbReference>
<dbReference type="PROSITE" id="PS00954">
    <property type="entry name" value="IGP_DEHYDRATASE_1"/>
    <property type="match status" value="1"/>
</dbReference>
<dbReference type="PROSITE" id="PS00955">
    <property type="entry name" value="IGP_DEHYDRATASE_2"/>
    <property type="match status" value="1"/>
</dbReference>
<comment type="catalytic activity">
    <reaction evidence="1">
        <text>D-erythro-1-(imidazol-4-yl)glycerol 3-phosphate = 3-(imidazol-4-yl)-2-oxopropyl phosphate + H2O</text>
        <dbReference type="Rhea" id="RHEA:11040"/>
        <dbReference type="ChEBI" id="CHEBI:15377"/>
        <dbReference type="ChEBI" id="CHEBI:57766"/>
        <dbReference type="ChEBI" id="CHEBI:58278"/>
        <dbReference type="EC" id="4.2.1.19"/>
    </reaction>
</comment>
<comment type="pathway">
    <text evidence="1">Amino-acid biosynthesis; L-histidine biosynthesis; L-histidine from 5-phospho-alpha-D-ribose 1-diphosphate: step 6/9.</text>
</comment>
<comment type="subcellular location">
    <subcellularLocation>
        <location evidence="1">Cytoplasm</location>
    </subcellularLocation>
</comment>
<comment type="similarity">
    <text evidence="1">Belongs to the imidazoleglycerol-phosphate dehydratase family.</text>
</comment>
<reference key="1">
    <citation type="journal article" date="2003" name="Proc. Natl. Acad. Sci. U.S.A.">
        <title>Genome sequence of the cyanobacterium Prochlorococcus marinus SS120, a nearly minimal oxyphototrophic genome.</title>
        <authorList>
            <person name="Dufresne A."/>
            <person name="Salanoubat M."/>
            <person name="Partensky F."/>
            <person name="Artiguenave F."/>
            <person name="Axmann I.M."/>
            <person name="Barbe V."/>
            <person name="Duprat S."/>
            <person name="Galperin M.Y."/>
            <person name="Koonin E.V."/>
            <person name="Le Gall F."/>
            <person name="Makarova K.S."/>
            <person name="Ostrowski M."/>
            <person name="Oztas S."/>
            <person name="Robert C."/>
            <person name="Rogozin I.B."/>
            <person name="Scanlan D.J."/>
            <person name="Tandeau de Marsac N."/>
            <person name="Weissenbach J."/>
            <person name="Wincker P."/>
            <person name="Wolf Y.I."/>
            <person name="Hess W.R."/>
        </authorList>
    </citation>
    <scope>NUCLEOTIDE SEQUENCE [LARGE SCALE GENOMIC DNA]</scope>
    <source>
        <strain>SARG / CCMP1375 / SS120</strain>
    </source>
</reference>
<sequence length="210" mass="22990">MNLQRQAEIHRVTNETEVSVRLGLDGSGRCKVSSGIAFLDHMLHQLSSHGLLDLELVAKGDTHIDDHHTNEDVGIALGQALSKALGNRKGIYRFGQFTAPLDEALVQVILDCSGRPHINYELEIPTQKIGTYDTELVREFFVALANNSGLTLHIRQLNGSNSHHIVEACFKAFAKSLRMAIEADPRRGGSIPSSKGVLEQAGDNNTEKSK</sequence>
<protein>
    <recommendedName>
        <fullName evidence="1">Imidazoleglycerol-phosphate dehydratase</fullName>
        <shortName evidence="1">IGPD</shortName>
        <ecNumber evidence="1">4.2.1.19</ecNumber>
    </recommendedName>
</protein>
<feature type="chain" id="PRO_0000158153" description="Imidazoleglycerol-phosphate dehydratase">
    <location>
        <begin position="1"/>
        <end position="210"/>
    </location>
</feature>
<feature type="region of interest" description="Disordered" evidence="2">
    <location>
        <begin position="185"/>
        <end position="210"/>
    </location>
</feature>
<organism>
    <name type="scientific">Prochlorococcus marinus (strain SARG / CCMP1375 / SS120)</name>
    <dbReference type="NCBI Taxonomy" id="167539"/>
    <lineage>
        <taxon>Bacteria</taxon>
        <taxon>Bacillati</taxon>
        <taxon>Cyanobacteriota</taxon>
        <taxon>Cyanophyceae</taxon>
        <taxon>Synechococcales</taxon>
        <taxon>Prochlorococcaceae</taxon>
        <taxon>Prochlorococcus</taxon>
    </lineage>
</organism>
<evidence type="ECO:0000255" key="1">
    <source>
        <dbReference type="HAMAP-Rule" id="MF_00076"/>
    </source>
</evidence>
<evidence type="ECO:0000256" key="2">
    <source>
        <dbReference type="SAM" id="MobiDB-lite"/>
    </source>
</evidence>
<gene>
    <name evidence="1" type="primary">hisB</name>
    <name type="ordered locus">Pro_0313</name>
</gene>
<keyword id="KW-0028">Amino-acid biosynthesis</keyword>
<keyword id="KW-0963">Cytoplasm</keyword>
<keyword id="KW-0368">Histidine biosynthesis</keyword>
<keyword id="KW-0456">Lyase</keyword>
<keyword id="KW-1185">Reference proteome</keyword>
<name>HIS7_PROMA</name>
<proteinExistence type="inferred from homology"/>